<reference key="1">
    <citation type="journal article" date="2010" name="J. Bacteriol.">
        <title>Whole genome sequences of two Xylella fastidiosa strains (M12 and M23) causing almond leaf scorch disease in California.</title>
        <authorList>
            <person name="Chen J."/>
            <person name="Xie G."/>
            <person name="Han S."/>
            <person name="Chertkov O."/>
            <person name="Sims D."/>
            <person name="Civerolo E.L."/>
        </authorList>
    </citation>
    <scope>NUCLEOTIDE SEQUENCE [LARGE SCALE GENOMIC DNA]</scope>
    <source>
        <strain>M23</strain>
    </source>
</reference>
<protein>
    <recommendedName>
        <fullName evidence="1">Protein ApaG</fullName>
    </recommendedName>
</protein>
<gene>
    <name evidence="1" type="primary">apaG</name>
    <name type="ordered locus">XfasM23_1289</name>
</gene>
<accession>B2I5R5</accession>
<dbReference type="EMBL" id="CP001011">
    <property type="protein sequence ID" value="ACB92710.1"/>
    <property type="molecule type" value="Genomic_DNA"/>
</dbReference>
<dbReference type="RefSeq" id="WP_004086104.1">
    <property type="nucleotide sequence ID" value="NC_010577.1"/>
</dbReference>
<dbReference type="SMR" id="B2I5R5"/>
<dbReference type="KEGG" id="xfn:XfasM23_1289"/>
<dbReference type="HOGENOM" id="CLU_128074_1_0_6"/>
<dbReference type="Proteomes" id="UP000001698">
    <property type="component" value="Chromosome"/>
</dbReference>
<dbReference type="GO" id="GO:0070987">
    <property type="term" value="P:error-free translesion synthesis"/>
    <property type="evidence" value="ECO:0007669"/>
    <property type="project" value="TreeGrafter"/>
</dbReference>
<dbReference type="Gene3D" id="2.60.40.1470">
    <property type="entry name" value="ApaG domain"/>
    <property type="match status" value="1"/>
</dbReference>
<dbReference type="HAMAP" id="MF_00791">
    <property type="entry name" value="ApaG"/>
    <property type="match status" value="1"/>
</dbReference>
<dbReference type="InterPro" id="IPR007474">
    <property type="entry name" value="ApaG_domain"/>
</dbReference>
<dbReference type="InterPro" id="IPR036767">
    <property type="entry name" value="ApaG_sf"/>
</dbReference>
<dbReference type="InterPro" id="IPR023065">
    <property type="entry name" value="Uncharacterised_ApaG"/>
</dbReference>
<dbReference type="NCBIfam" id="NF003967">
    <property type="entry name" value="PRK05461.1"/>
    <property type="match status" value="1"/>
</dbReference>
<dbReference type="PANTHER" id="PTHR14289">
    <property type="entry name" value="F-BOX ONLY PROTEIN 3"/>
    <property type="match status" value="1"/>
</dbReference>
<dbReference type="PANTHER" id="PTHR14289:SF16">
    <property type="entry name" value="POLYMERASE DELTA-INTERACTING PROTEIN 2"/>
    <property type="match status" value="1"/>
</dbReference>
<dbReference type="Pfam" id="PF04379">
    <property type="entry name" value="DUF525"/>
    <property type="match status" value="1"/>
</dbReference>
<dbReference type="SUPFAM" id="SSF110069">
    <property type="entry name" value="ApaG-like"/>
    <property type="match status" value="1"/>
</dbReference>
<dbReference type="PROSITE" id="PS51087">
    <property type="entry name" value="APAG"/>
    <property type="match status" value="1"/>
</dbReference>
<organism>
    <name type="scientific">Xylella fastidiosa (strain M23)</name>
    <dbReference type="NCBI Taxonomy" id="405441"/>
    <lineage>
        <taxon>Bacteria</taxon>
        <taxon>Pseudomonadati</taxon>
        <taxon>Pseudomonadota</taxon>
        <taxon>Gammaproteobacteria</taxon>
        <taxon>Lysobacterales</taxon>
        <taxon>Lysobacteraceae</taxon>
        <taxon>Xylella</taxon>
    </lineage>
</organism>
<proteinExistence type="inferred from homology"/>
<name>APAG_XYLF2</name>
<sequence length="127" mass="14240">MENNPSSKIEVAVSSRFLDQQSNRNEGRYVFAYTIRIYNAGNVPARLIARHWQITDANGKVEYVTGEGVIGEQPRLRPGEEFRYTSGVVLGTEQGQMQGHYDMMADDGTEFTATISPFVLSVPRTLH</sequence>
<feature type="chain" id="PRO_1000133822" description="Protein ApaG">
    <location>
        <begin position="1"/>
        <end position="127"/>
    </location>
</feature>
<feature type="domain" description="ApaG" evidence="1">
    <location>
        <begin position="3"/>
        <end position="127"/>
    </location>
</feature>
<evidence type="ECO:0000255" key="1">
    <source>
        <dbReference type="HAMAP-Rule" id="MF_00791"/>
    </source>
</evidence>